<evidence type="ECO:0000255" key="1">
    <source>
        <dbReference type="HAMAP-Rule" id="MF_04028"/>
    </source>
</evidence>
<proteinExistence type="inferred from homology"/>
<feature type="chain" id="PRO_0000190511" description="Ribonucleoside-diphosphate reductase small subunit">
    <location>
        <begin position="1"/>
        <end position="303"/>
    </location>
</feature>
<feature type="transmembrane region" description="Helical" evidence="1">
    <location>
        <begin position="147"/>
        <end position="167"/>
    </location>
</feature>
<feature type="active site" evidence="1">
    <location>
        <position position="97"/>
    </location>
</feature>
<feature type="binding site" evidence="1">
    <location>
        <position position="60"/>
    </location>
    <ligand>
        <name>Fe cation</name>
        <dbReference type="ChEBI" id="CHEBI:24875"/>
        <label>1</label>
    </ligand>
</feature>
<feature type="binding site" evidence="1">
    <location>
        <position position="90"/>
    </location>
    <ligand>
        <name>Fe cation</name>
        <dbReference type="ChEBI" id="CHEBI:24875"/>
        <label>1</label>
    </ligand>
</feature>
<feature type="binding site" evidence="1">
    <location>
        <position position="90"/>
    </location>
    <ligand>
        <name>Fe cation</name>
        <dbReference type="ChEBI" id="CHEBI:24875"/>
        <label>2</label>
    </ligand>
</feature>
<feature type="binding site" evidence="1">
    <location>
        <position position="93"/>
    </location>
    <ligand>
        <name>Fe cation</name>
        <dbReference type="ChEBI" id="CHEBI:24875"/>
        <label>1</label>
    </ligand>
</feature>
<feature type="binding site" evidence="1">
    <location>
        <position position="153"/>
    </location>
    <ligand>
        <name>Fe cation</name>
        <dbReference type="ChEBI" id="CHEBI:24875"/>
        <label>2</label>
    </ligand>
</feature>
<feature type="binding site" evidence="1">
    <location>
        <position position="187"/>
    </location>
    <ligand>
        <name>Fe cation</name>
        <dbReference type="ChEBI" id="CHEBI:24875"/>
        <label>2</label>
    </ligand>
</feature>
<feature type="binding site" evidence="1">
    <location>
        <position position="190"/>
    </location>
    <ligand>
        <name>Fe cation</name>
        <dbReference type="ChEBI" id="CHEBI:24875"/>
        <label>2</label>
    </ligand>
</feature>
<keyword id="KW-0235">DNA replication</keyword>
<keyword id="KW-1043">Host membrane</keyword>
<keyword id="KW-0408">Iron</keyword>
<keyword id="KW-0472">Membrane</keyword>
<keyword id="KW-0479">Metal-binding</keyword>
<keyword id="KW-0560">Oxidoreductase</keyword>
<keyword id="KW-0812">Transmembrane</keyword>
<keyword id="KW-1133">Transmembrane helix</keyword>
<keyword id="KW-1251">Viral latency</keyword>
<keyword id="KW-1272">Viral reactivation from latency</keyword>
<sequence>MEYFYTSQCPDMDHLRSLSVANRWLETDLPLGDDAKDVAALSEPELEFYRFLFAFLSAADDLVNVNLGSLSELFTQKDILHYYIEQECIEVVHSRVYSAIQLMLFRGDAAARERYVRAALRDEAIRRKVEWLDSRVAECASVAEKYLLMILIEGIFFASSFASISYLRTHNLFVVTCQSNDFISRDEAIHTSASCCIYNNYLGDAPRPDEARIHQLFAEAVEIECEFLRARAPRDSLLLDLPAIISYVRYSADRLLQAIGASPLFGAPAPAADFPMALMVAEKHTNFFERRSTNYTGTVVNDL</sequence>
<reference key="1">
    <citation type="journal article" date="1994" name="Biochim. Biophys. Acta">
        <title>Large and small subunits of the Aujeszky's disease virus ribonucleotide reductase: nucleotide sequence and putative structure.</title>
        <authorList>
            <person name="Kaliman A."/>
            <person name="Boldogkoi Z."/>
            <person name="Fodor I."/>
        </authorList>
    </citation>
    <scope>NUCLEOTIDE SEQUENCE [GENOMIC DNA]</scope>
</reference>
<reference key="2">
    <citation type="journal article" date="2009" name="Trends Biochem. Sci.">
        <title>Tinkering with a viral ribonucleotide reductase.</title>
        <authorList>
            <person name="Lembo D."/>
            <person name="Brune W."/>
        </authorList>
    </citation>
    <scope>REVIEW</scope>
</reference>
<name>RIR2_SUHVK</name>
<dbReference type="EC" id="1.17.4.1" evidence="1"/>
<dbReference type="EMBL" id="X72087">
    <property type="protein sequence ID" value="CAA50977.1"/>
    <property type="molecule type" value="Genomic_DNA"/>
</dbReference>
<dbReference type="EMBL" id="X80797">
    <property type="protein sequence ID" value="CAA56776.1"/>
    <property type="molecule type" value="Genomic_DNA"/>
</dbReference>
<dbReference type="PIR" id="S47526">
    <property type="entry name" value="S47526"/>
</dbReference>
<dbReference type="RefSeq" id="YP_068343.1">
    <property type="nucleotide sequence ID" value="NC_006151.1"/>
</dbReference>
<dbReference type="SMR" id="P50645"/>
<dbReference type="GeneID" id="2952536"/>
<dbReference type="KEGG" id="vg:2952536"/>
<dbReference type="GO" id="GO:0033644">
    <property type="term" value="C:host cell membrane"/>
    <property type="evidence" value="ECO:0007669"/>
    <property type="project" value="UniProtKB-SubCell"/>
</dbReference>
<dbReference type="GO" id="GO:0016020">
    <property type="term" value="C:membrane"/>
    <property type="evidence" value="ECO:0007669"/>
    <property type="project" value="UniProtKB-KW"/>
</dbReference>
<dbReference type="GO" id="GO:0046872">
    <property type="term" value="F:metal ion binding"/>
    <property type="evidence" value="ECO:0007669"/>
    <property type="project" value="UniProtKB-KW"/>
</dbReference>
<dbReference type="GO" id="GO:0004748">
    <property type="term" value="F:ribonucleoside-diphosphate reductase activity, thioredoxin disulfide as acceptor"/>
    <property type="evidence" value="ECO:0007669"/>
    <property type="project" value="UniProtKB-EC"/>
</dbReference>
<dbReference type="GO" id="GO:0009263">
    <property type="term" value="P:deoxyribonucleotide biosynthetic process"/>
    <property type="evidence" value="ECO:0007669"/>
    <property type="project" value="InterPro"/>
</dbReference>
<dbReference type="GO" id="GO:0006260">
    <property type="term" value="P:DNA replication"/>
    <property type="evidence" value="ECO:0007669"/>
    <property type="project" value="UniProtKB-KW"/>
</dbReference>
<dbReference type="GO" id="GO:0019046">
    <property type="term" value="P:release from viral latency"/>
    <property type="evidence" value="ECO:0007669"/>
    <property type="project" value="UniProtKB-KW"/>
</dbReference>
<dbReference type="CDD" id="cd01049">
    <property type="entry name" value="RNRR2"/>
    <property type="match status" value="1"/>
</dbReference>
<dbReference type="Gene3D" id="1.10.620.20">
    <property type="entry name" value="Ribonucleotide Reductase, subunit A"/>
    <property type="match status" value="1"/>
</dbReference>
<dbReference type="HAMAP" id="MF_04028">
    <property type="entry name" value="HSV_RIR2"/>
    <property type="match status" value="1"/>
</dbReference>
<dbReference type="InterPro" id="IPR009078">
    <property type="entry name" value="Ferritin-like_SF"/>
</dbReference>
<dbReference type="InterPro" id="IPR034715">
    <property type="entry name" value="HSV_RIR2"/>
</dbReference>
<dbReference type="InterPro" id="IPR012348">
    <property type="entry name" value="RNR-like"/>
</dbReference>
<dbReference type="InterPro" id="IPR033909">
    <property type="entry name" value="RNR_small"/>
</dbReference>
<dbReference type="InterPro" id="IPR030475">
    <property type="entry name" value="RNR_small_AS"/>
</dbReference>
<dbReference type="InterPro" id="IPR000358">
    <property type="entry name" value="RNR_small_fam"/>
</dbReference>
<dbReference type="PANTHER" id="PTHR23409">
    <property type="entry name" value="RIBONUCLEOSIDE-DIPHOSPHATE REDUCTASE SMALL CHAIN"/>
    <property type="match status" value="1"/>
</dbReference>
<dbReference type="PANTHER" id="PTHR23409:SF18">
    <property type="entry name" value="RIBONUCLEOSIDE-DIPHOSPHATE REDUCTASE SUBUNIT M2"/>
    <property type="match status" value="1"/>
</dbReference>
<dbReference type="Pfam" id="PF00268">
    <property type="entry name" value="Ribonuc_red_sm"/>
    <property type="match status" value="1"/>
</dbReference>
<dbReference type="SUPFAM" id="SSF47240">
    <property type="entry name" value="Ferritin-like"/>
    <property type="match status" value="1"/>
</dbReference>
<dbReference type="PROSITE" id="PS00368">
    <property type="entry name" value="RIBORED_SMALL"/>
    <property type="match status" value="1"/>
</dbReference>
<organism>
    <name type="scientific">Suid herpesvirus 1 (strain Kaplan)</name>
    <name type="common">SuHV-1</name>
    <name type="synonym">Pseudorabies virus (strain Kaplan)</name>
    <dbReference type="NCBI Taxonomy" id="33703"/>
    <lineage>
        <taxon>Viruses</taxon>
        <taxon>Duplodnaviria</taxon>
        <taxon>Heunggongvirae</taxon>
        <taxon>Peploviricota</taxon>
        <taxon>Herviviricetes</taxon>
        <taxon>Herpesvirales</taxon>
        <taxon>Orthoherpesviridae</taxon>
        <taxon>Alphaherpesvirinae</taxon>
        <taxon>Varicellovirus</taxon>
        <taxon>Varicellovirus suidalpha1</taxon>
        <taxon>Suid herpesvirus 1</taxon>
    </lineage>
</organism>
<gene>
    <name evidence="1" type="primary">RIR2</name>
    <name type="synonym">RR2</name>
    <name type="synonym">UL40</name>
</gene>
<comment type="function">
    <text evidence="1">Ribonucleoside-diphosphate reductase holoenzyme provides the precursors necessary for viral DNA synthesis. Allows virus growth in non-dividing cells, as well as reactivation from latency in infected hosts. Catalyzes the biosynthesis of deoxyribonucleotides from the corresponding ribonucleotides.</text>
</comment>
<comment type="catalytic activity">
    <reaction evidence="1">
        <text>a 2'-deoxyribonucleoside 5'-diphosphate + [thioredoxin]-disulfide + H2O = a ribonucleoside 5'-diphosphate + [thioredoxin]-dithiol</text>
        <dbReference type="Rhea" id="RHEA:23252"/>
        <dbReference type="Rhea" id="RHEA-COMP:10698"/>
        <dbReference type="Rhea" id="RHEA-COMP:10700"/>
        <dbReference type="ChEBI" id="CHEBI:15377"/>
        <dbReference type="ChEBI" id="CHEBI:29950"/>
        <dbReference type="ChEBI" id="CHEBI:50058"/>
        <dbReference type="ChEBI" id="CHEBI:57930"/>
        <dbReference type="ChEBI" id="CHEBI:73316"/>
        <dbReference type="EC" id="1.17.4.1"/>
    </reaction>
</comment>
<comment type="cofactor">
    <cofactor evidence="1">
        <name>Fe cation</name>
        <dbReference type="ChEBI" id="CHEBI:24875"/>
    </cofactor>
</comment>
<comment type="subunit">
    <text evidence="1">Heterotetramer composed of a homodimer of the large subunit (R1) and a homodimer of the small subunit (R2). Larger multisubunit protein complex are also active, composed of (R1)n(R2)n.</text>
</comment>
<comment type="subcellular location">
    <subcellularLocation>
        <location evidence="1">Host membrane</location>
        <topology evidence="1">Single-pass membrane protein</topology>
    </subcellularLocation>
</comment>
<comment type="similarity">
    <text evidence="1">Belongs to the ribonucleoside diphosphate reductase small chain family.</text>
</comment>
<protein>
    <recommendedName>
        <fullName evidence="1">Ribonucleoside-diphosphate reductase small subunit</fullName>
        <ecNumber evidence="1">1.17.4.1</ecNumber>
    </recommendedName>
    <alternativeName>
        <fullName evidence="1">Ribonucleotide reductase small subunit</fullName>
    </alternativeName>
</protein>
<accession>P50645</accession>
<organismHost>
    <name type="scientific">Sus scrofa</name>
    <name type="common">Pig</name>
    <dbReference type="NCBI Taxonomy" id="9823"/>
</organismHost>